<comment type="function">
    <text evidence="1">Negatively regulates transcription of bacterial ribonucleotide reductase nrd genes and operons by binding to NrdR-boxes.</text>
</comment>
<comment type="cofactor">
    <cofactor evidence="1">
        <name>Zn(2+)</name>
        <dbReference type="ChEBI" id="CHEBI:29105"/>
    </cofactor>
    <text evidence="1">Binds 1 zinc ion.</text>
</comment>
<comment type="similarity">
    <text evidence="1">Belongs to the NrdR family.</text>
</comment>
<proteinExistence type="inferred from homology"/>
<name>NRDR_DESHY</name>
<sequence>MHCPFCGNDETKVLESRQVEEGTAVRRRRECERCARRFTTFEKFEDTPLIVVKKDGRREEFSRGKLKAGILRACEKRPVSIEQIETLVYEIEKGLRNGSEREVQSKAIGEAVMNALVHLDEVAYIRFASVYREFKDVQRFLEELHELVEKKSSR</sequence>
<protein>
    <recommendedName>
        <fullName evidence="1">Transcriptional repressor NrdR</fullName>
    </recommendedName>
</protein>
<reference key="1">
    <citation type="journal article" date="2006" name="J. Bacteriol.">
        <title>Complete genome sequence of the dehalorespiring bacterium Desulfitobacterium hafniense Y51 and comparison with Dehalococcoides ethenogenes 195.</title>
        <authorList>
            <person name="Nonaka H."/>
            <person name="Keresztes G."/>
            <person name="Shinoda Y."/>
            <person name="Ikenaga Y."/>
            <person name="Abe M."/>
            <person name="Naito K."/>
            <person name="Inatomi K."/>
            <person name="Furukawa K."/>
            <person name="Inui M."/>
            <person name="Yukawa H."/>
        </authorList>
    </citation>
    <scope>NUCLEOTIDE SEQUENCE [LARGE SCALE GENOMIC DNA]</scope>
    <source>
        <strain>Y51</strain>
    </source>
</reference>
<feature type="chain" id="PRO_0000264173" description="Transcriptional repressor NrdR">
    <location>
        <begin position="1"/>
        <end position="154"/>
    </location>
</feature>
<feature type="domain" description="ATP-cone" evidence="1">
    <location>
        <begin position="49"/>
        <end position="139"/>
    </location>
</feature>
<feature type="zinc finger region" evidence="1">
    <location>
        <begin position="3"/>
        <end position="34"/>
    </location>
</feature>
<dbReference type="EMBL" id="AP008230">
    <property type="protein sequence ID" value="BAE82110.1"/>
    <property type="molecule type" value="Genomic_DNA"/>
</dbReference>
<dbReference type="RefSeq" id="WP_011459010.1">
    <property type="nucleotide sequence ID" value="NC_007907.1"/>
</dbReference>
<dbReference type="SMR" id="Q251D2"/>
<dbReference type="STRING" id="138119.DSY0321"/>
<dbReference type="KEGG" id="dsy:DSY0321"/>
<dbReference type="eggNOG" id="COG1327">
    <property type="taxonomic scope" value="Bacteria"/>
</dbReference>
<dbReference type="HOGENOM" id="CLU_108412_0_0_9"/>
<dbReference type="Proteomes" id="UP000001946">
    <property type="component" value="Chromosome"/>
</dbReference>
<dbReference type="GO" id="GO:0005524">
    <property type="term" value="F:ATP binding"/>
    <property type="evidence" value="ECO:0007669"/>
    <property type="project" value="UniProtKB-KW"/>
</dbReference>
<dbReference type="GO" id="GO:0003677">
    <property type="term" value="F:DNA binding"/>
    <property type="evidence" value="ECO:0007669"/>
    <property type="project" value="UniProtKB-KW"/>
</dbReference>
<dbReference type="GO" id="GO:0008270">
    <property type="term" value="F:zinc ion binding"/>
    <property type="evidence" value="ECO:0007669"/>
    <property type="project" value="UniProtKB-UniRule"/>
</dbReference>
<dbReference type="GO" id="GO:0045892">
    <property type="term" value="P:negative regulation of DNA-templated transcription"/>
    <property type="evidence" value="ECO:0007669"/>
    <property type="project" value="UniProtKB-UniRule"/>
</dbReference>
<dbReference type="HAMAP" id="MF_00440">
    <property type="entry name" value="NrdR"/>
    <property type="match status" value="1"/>
</dbReference>
<dbReference type="InterPro" id="IPR005144">
    <property type="entry name" value="ATP-cone_dom"/>
</dbReference>
<dbReference type="InterPro" id="IPR055173">
    <property type="entry name" value="NrdR-like_N"/>
</dbReference>
<dbReference type="InterPro" id="IPR003796">
    <property type="entry name" value="RNR_NrdR-like"/>
</dbReference>
<dbReference type="NCBIfam" id="TIGR00244">
    <property type="entry name" value="transcriptional regulator NrdR"/>
    <property type="match status" value="1"/>
</dbReference>
<dbReference type="PANTHER" id="PTHR30455">
    <property type="entry name" value="TRANSCRIPTIONAL REPRESSOR NRDR"/>
    <property type="match status" value="1"/>
</dbReference>
<dbReference type="PANTHER" id="PTHR30455:SF2">
    <property type="entry name" value="TRANSCRIPTIONAL REPRESSOR NRDR"/>
    <property type="match status" value="1"/>
</dbReference>
<dbReference type="Pfam" id="PF03477">
    <property type="entry name" value="ATP-cone"/>
    <property type="match status" value="1"/>
</dbReference>
<dbReference type="Pfam" id="PF22811">
    <property type="entry name" value="Zn_ribbon_NrdR"/>
    <property type="match status" value="1"/>
</dbReference>
<dbReference type="PROSITE" id="PS51161">
    <property type="entry name" value="ATP_CONE"/>
    <property type="match status" value="1"/>
</dbReference>
<accession>Q251D2</accession>
<organism>
    <name type="scientific">Desulfitobacterium hafniense (strain Y51)</name>
    <dbReference type="NCBI Taxonomy" id="138119"/>
    <lineage>
        <taxon>Bacteria</taxon>
        <taxon>Bacillati</taxon>
        <taxon>Bacillota</taxon>
        <taxon>Clostridia</taxon>
        <taxon>Eubacteriales</taxon>
        <taxon>Desulfitobacteriaceae</taxon>
        <taxon>Desulfitobacterium</taxon>
    </lineage>
</organism>
<gene>
    <name evidence="1" type="primary">nrdR</name>
    <name type="ordered locus">DSY0321</name>
</gene>
<keyword id="KW-0067">ATP-binding</keyword>
<keyword id="KW-0238">DNA-binding</keyword>
<keyword id="KW-0479">Metal-binding</keyword>
<keyword id="KW-0547">Nucleotide-binding</keyword>
<keyword id="KW-1185">Reference proteome</keyword>
<keyword id="KW-0678">Repressor</keyword>
<keyword id="KW-0804">Transcription</keyword>
<keyword id="KW-0805">Transcription regulation</keyword>
<keyword id="KW-0862">Zinc</keyword>
<keyword id="KW-0863">Zinc-finger</keyword>
<evidence type="ECO:0000255" key="1">
    <source>
        <dbReference type="HAMAP-Rule" id="MF_00440"/>
    </source>
</evidence>